<organism>
    <name type="scientific">Mus musculus</name>
    <name type="common">Mouse</name>
    <dbReference type="NCBI Taxonomy" id="10090"/>
    <lineage>
        <taxon>Eukaryota</taxon>
        <taxon>Metazoa</taxon>
        <taxon>Chordata</taxon>
        <taxon>Craniata</taxon>
        <taxon>Vertebrata</taxon>
        <taxon>Euteleostomi</taxon>
        <taxon>Mammalia</taxon>
        <taxon>Eutheria</taxon>
        <taxon>Euarchontoglires</taxon>
        <taxon>Glires</taxon>
        <taxon>Rodentia</taxon>
        <taxon>Myomorpha</taxon>
        <taxon>Muroidea</taxon>
        <taxon>Muridae</taxon>
        <taxon>Murinae</taxon>
        <taxon>Mus</taxon>
        <taxon>Mus</taxon>
    </lineage>
</organism>
<accession>Q61268</accession>
<reference key="1">
    <citation type="journal article" date="1994" name="Genomics">
        <title>The apolipoprotein C2-linked (Acl) gene: a new gene within the mouse apolipoprotein e-c1-c2 gene cluster.</title>
        <authorList>
            <person name="van Eck M.M."/>
            <person name="Hoffer M.J."/>
            <person name="Havekes L.M."/>
            <person name="Frants R.R."/>
            <person name="Hofker M.H."/>
        </authorList>
    </citation>
    <scope>NUCLEOTIDE SEQUENCE [GENOMIC DNA]</scope>
    <source>
        <strain>C57BL/6J</strain>
        <tissue>Liver</tissue>
    </source>
</reference>
<reference key="2">
    <citation type="journal article" date="2004" name="Genome Res.">
        <title>The status, quality, and expansion of the NIH full-length cDNA project: the Mammalian Gene Collection (MGC).</title>
        <authorList>
            <consortium name="The MGC Project Team"/>
        </authorList>
    </citation>
    <scope>NUCLEOTIDE SEQUENCE [LARGE SCALE MRNA]</scope>
    <source>
        <strain>FVB/N</strain>
        <tissue>Liver</tissue>
    </source>
</reference>
<reference key="3">
    <citation type="journal article" date="2010" name="Cell">
        <title>A tissue-specific atlas of mouse protein phosphorylation and expression.</title>
        <authorList>
            <person name="Huttlin E.L."/>
            <person name="Jedrychowski M.P."/>
            <person name="Elias J.E."/>
            <person name="Goswami T."/>
            <person name="Rad R."/>
            <person name="Beausoleil S.A."/>
            <person name="Villen J."/>
            <person name="Haas W."/>
            <person name="Sowa M.E."/>
            <person name="Gygi S.P."/>
        </authorList>
    </citation>
    <scope>IDENTIFICATION BY MASS SPECTROMETRY [LARGE SCALE ANALYSIS]</scope>
    <source>
        <tissue>Brown adipose tissue</tissue>
        <tissue>Liver</tissue>
        <tissue>Lung</tissue>
    </source>
</reference>
<gene>
    <name type="primary">Apoc4</name>
    <name type="synonym">Acl</name>
</gene>
<comment type="function">
    <text>May participate in lipoprotein metabolism.</text>
</comment>
<comment type="subcellular location">
    <subcellularLocation>
        <location>Secreted</location>
    </subcellularLocation>
</comment>
<comment type="tissue specificity">
    <text>Expressed by the liver and secreted in plasma.</text>
</comment>
<comment type="similarity">
    <text evidence="3">Belongs to the apolipoprotein C4 family.</text>
</comment>
<sequence length="124" mass="14288">MSLLRCRPRDLPSVSLSVLFLVSFVASMSTESLSPTPGPESSRWSLVRARVLEMVEPLVTRTRDRWQWFWGPGAVQGFMQTYYEDHLKDLGPRTQAWLQSSRDHLLNKTHSLCPRLLCKDRTQG</sequence>
<dbReference type="EMBL" id="Z24722">
    <property type="protein sequence ID" value="CAA80850.1"/>
    <property type="molecule type" value="Genomic_DNA"/>
</dbReference>
<dbReference type="EMBL" id="BC024657">
    <property type="protein sequence ID" value="AAH24657.1"/>
    <property type="molecule type" value="mRNA"/>
</dbReference>
<dbReference type="CCDS" id="CCDS20910.1"/>
<dbReference type="PIR" id="A54773">
    <property type="entry name" value="A54773"/>
</dbReference>
<dbReference type="RefSeq" id="NP_031411.1">
    <property type="nucleotide sequence ID" value="NM_007385.3"/>
</dbReference>
<dbReference type="FunCoup" id="Q61268">
    <property type="interactions" value="18"/>
</dbReference>
<dbReference type="STRING" id="10090.ENSMUSP00000003071"/>
<dbReference type="GlyCosmos" id="Q61268">
    <property type="glycosylation" value="1 site, No reported glycans"/>
</dbReference>
<dbReference type="GlyGen" id="Q61268">
    <property type="glycosylation" value="2 sites"/>
</dbReference>
<dbReference type="PhosphoSitePlus" id="Q61268"/>
<dbReference type="CPTAC" id="non-CPTAC-3419"/>
<dbReference type="jPOST" id="Q61268"/>
<dbReference type="PaxDb" id="10090-ENSMUSP00000003071"/>
<dbReference type="PeptideAtlas" id="Q61268"/>
<dbReference type="ProteomicsDB" id="296338"/>
<dbReference type="Antibodypedia" id="73673">
    <property type="antibodies" value="123 antibodies from 23 providers"/>
</dbReference>
<dbReference type="DNASU" id="11425"/>
<dbReference type="Ensembl" id="ENSMUST00000003071.10">
    <property type="protein sequence ID" value="ENSMUSP00000003071.9"/>
    <property type="gene ID" value="ENSMUSG00000074336.6"/>
</dbReference>
<dbReference type="GeneID" id="11425"/>
<dbReference type="KEGG" id="mmu:11425"/>
<dbReference type="UCSC" id="uc009fmu.2">
    <property type="organism name" value="mouse"/>
</dbReference>
<dbReference type="AGR" id="MGI:87878"/>
<dbReference type="CTD" id="346"/>
<dbReference type="MGI" id="MGI:87878">
    <property type="gene designation" value="Apoc4"/>
</dbReference>
<dbReference type="VEuPathDB" id="HostDB:ENSMUSG00000074336"/>
<dbReference type="eggNOG" id="ENOG502TE52">
    <property type="taxonomic scope" value="Eukaryota"/>
</dbReference>
<dbReference type="GeneTree" id="ENSGT00390000015914"/>
<dbReference type="HOGENOM" id="CLU_161459_0_0_1"/>
<dbReference type="InParanoid" id="Q61268"/>
<dbReference type="OMA" id="KWQWFWG"/>
<dbReference type="OrthoDB" id="9449255at2759"/>
<dbReference type="PhylomeDB" id="Q61268"/>
<dbReference type="TreeFam" id="TF336879"/>
<dbReference type="Reactome" id="R-MMU-8866423">
    <property type="pathway name" value="VLDL assembly"/>
</dbReference>
<dbReference type="Reactome" id="R-MMU-8964046">
    <property type="pathway name" value="VLDL clearance"/>
</dbReference>
<dbReference type="BioGRID-ORCS" id="11425">
    <property type="hits" value="2 hits in 79 CRISPR screens"/>
</dbReference>
<dbReference type="PRO" id="PR:Q61268"/>
<dbReference type="Proteomes" id="UP000000589">
    <property type="component" value="Chromosome 7"/>
</dbReference>
<dbReference type="RNAct" id="Q61268">
    <property type="molecule type" value="protein"/>
</dbReference>
<dbReference type="Bgee" id="ENSMUSG00000074336">
    <property type="expression patterns" value="Expressed in left lobe of liver and 41 other cell types or tissues"/>
</dbReference>
<dbReference type="GO" id="GO:0005576">
    <property type="term" value="C:extracellular region"/>
    <property type="evidence" value="ECO:0000304"/>
    <property type="project" value="Reactome"/>
</dbReference>
<dbReference type="GO" id="GO:0034364">
    <property type="term" value="C:high-density lipoprotein particle"/>
    <property type="evidence" value="ECO:0007669"/>
    <property type="project" value="Ensembl"/>
</dbReference>
<dbReference type="GO" id="GO:0034361">
    <property type="term" value="C:very-low-density lipoprotein particle"/>
    <property type="evidence" value="ECO:0000314"/>
    <property type="project" value="BHF-UCL"/>
</dbReference>
<dbReference type="GO" id="GO:0019915">
    <property type="term" value="P:lipid storage"/>
    <property type="evidence" value="ECO:0007669"/>
    <property type="project" value="Ensembl"/>
</dbReference>
<dbReference type="GO" id="GO:0006869">
    <property type="term" value="P:lipid transport"/>
    <property type="evidence" value="ECO:0007669"/>
    <property type="project" value="UniProtKB-KW"/>
</dbReference>
<dbReference type="GO" id="GO:0070328">
    <property type="term" value="P:triglyceride homeostasis"/>
    <property type="evidence" value="ECO:0007669"/>
    <property type="project" value="Ensembl"/>
</dbReference>
<dbReference type="InterPro" id="IPR028120">
    <property type="entry name" value="APOC4"/>
</dbReference>
<dbReference type="PANTHER" id="PTHR32288">
    <property type="entry name" value="APOLIPOPROTEIN C-IV"/>
    <property type="match status" value="1"/>
</dbReference>
<dbReference type="PANTHER" id="PTHR32288:SF0">
    <property type="entry name" value="APOLIPOPROTEIN C-IV"/>
    <property type="match status" value="1"/>
</dbReference>
<dbReference type="Pfam" id="PF15119">
    <property type="entry name" value="APOC4"/>
    <property type="match status" value="1"/>
</dbReference>
<evidence type="ECO:0000250" key="1">
    <source>
        <dbReference type="UniProtKB" id="P55057"/>
    </source>
</evidence>
<evidence type="ECO:0000255" key="2"/>
<evidence type="ECO:0000305" key="3"/>
<proteinExistence type="evidence at protein level"/>
<protein>
    <recommendedName>
        <fullName>Apolipoprotein C-IV</fullName>
        <shortName>Apo-CIV</shortName>
        <shortName>ApoC-IV</shortName>
    </recommendedName>
    <alternativeName>
        <fullName>Apolipoprotein C2-linked</fullName>
        <shortName>ACL</shortName>
    </alternativeName>
    <alternativeName>
        <fullName>Apolipoprotein C4</fullName>
    </alternativeName>
</protein>
<feature type="signal peptide" evidence="1">
    <location>
        <begin position="1"/>
        <end position="27"/>
    </location>
</feature>
<feature type="chain" id="PRO_0000002037" description="Apolipoprotein C-IV">
    <location>
        <begin position="28"/>
        <end position="124"/>
    </location>
</feature>
<feature type="glycosylation site" description="N-linked (GlcNAc...) asparagine" evidence="2">
    <location>
        <position position="107"/>
    </location>
</feature>
<name>APOC4_MOUSE</name>
<keyword id="KW-0325">Glycoprotein</keyword>
<keyword id="KW-0445">Lipid transport</keyword>
<keyword id="KW-1185">Reference proteome</keyword>
<keyword id="KW-0964">Secreted</keyword>
<keyword id="KW-0732">Signal</keyword>
<keyword id="KW-0813">Transport</keyword>